<proteinExistence type="inferred from homology"/>
<keyword id="KW-0021">Allosteric enzyme</keyword>
<keyword id="KW-0119">Carbohydrate metabolism</keyword>
<keyword id="KW-0378">Hydrolase</keyword>
<comment type="function">
    <text evidence="1">Catalyzes the reversible isomerization-deamination of glucosamine 6-phosphate (GlcN6P) to form fructose 6-phosphate (Fru6P) and ammonium ion.</text>
</comment>
<comment type="catalytic activity">
    <reaction evidence="1">
        <text>alpha-D-glucosamine 6-phosphate + H2O = beta-D-fructose 6-phosphate + NH4(+)</text>
        <dbReference type="Rhea" id="RHEA:12172"/>
        <dbReference type="ChEBI" id="CHEBI:15377"/>
        <dbReference type="ChEBI" id="CHEBI:28938"/>
        <dbReference type="ChEBI" id="CHEBI:57634"/>
        <dbReference type="ChEBI" id="CHEBI:75989"/>
        <dbReference type="EC" id="3.5.99.6"/>
    </reaction>
</comment>
<comment type="activity regulation">
    <text evidence="1">Allosterically activated by N-acetylglucosamine 6-phosphate (GlcNAc6P).</text>
</comment>
<comment type="pathway">
    <text evidence="1">Amino-sugar metabolism; N-acetylneuraminate degradation; D-fructose 6-phosphate from N-acetylneuraminate: step 5/5.</text>
</comment>
<comment type="subunit">
    <text evidence="1">Homohexamer.</text>
</comment>
<comment type="similarity">
    <text evidence="1">Belongs to the glucosamine/galactosamine-6-phosphate isomerase family. NagB subfamily.</text>
</comment>
<name>NAGB_ALIFM</name>
<reference key="1">
    <citation type="submission" date="2008-08" db="EMBL/GenBank/DDBJ databases">
        <title>Complete sequence of Vibrio fischeri strain MJ11.</title>
        <authorList>
            <person name="Mandel M.J."/>
            <person name="Stabb E.V."/>
            <person name="Ruby E.G."/>
            <person name="Ferriera S."/>
            <person name="Johnson J."/>
            <person name="Kravitz S."/>
            <person name="Beeson K."/>
            <person name="Sutton G."/>
            <person name="Rogers Y.-H."/>
            <person name="Friedman R."/>
            <person name="Frazier M."/>
            <person name="Venter J.C."/>
        </authorList>
    </citation>
    <scope>NUCLEOTIDE SEQUENCE [LARGE SCALE GENOMIC DNA]</scope>
    <source>
        <strain>MJ11</strain>
    </source>
</reference>
<sequence length="266" mass="29730">MRLIPLNRAEQVGAWSAQHIVNRINAFNPTADRPFVLGLPTGGTPLNTYKKLIELHKAGEVSFKNVVTFNMDEYVGLPADHPESYRTFMHENFFNHIDIQPENINLLNGNAEDHEAECQRYEDKIKSYGRINLFMGGVGNDGHIAFNEPASSLSSRTRIKTLTEDTRIANSRFFGGDMNLVPEYSLTIGVGTLLDSEEIMILITGHNKGLALQAAVEGSVNHLWTVSALQLHPKSVIVCDEPSTQELKVKTVKYFQQLEAKNMEGF</sequence>
<feature type="chain" id="PRO_1000139800" description="Glucosamine-6-phosphate deaminase">
    <location>
        <begin position="1"/>
        <end position="266"/>
    </location>
</feature>
<feature type="active site" description="Proton acceptor; for enolization step" evidence="1">
    <location>
        <position position="72"/>
    </location>
</feature>
<feature type="active site" description="For ring-opening step" evidence="1">
    <location>
        <position position="141"/>
    </location>
</feature>
<feature type="active site" description="Proton acceptor; for ring-opening step" evidence="1">
    <location>
        <position position="143"/>
    </location>
</feature>
<feature type="active site" description="For ring-opening step" evidence="1">
    <location>
        <position position="148"/>
    </location>
</feature>
<feature type="site" description="Part of the allosteric site" evidence="1">
    <location>
        <position position="151"/>
    </location>
</feature>
<feature type="site" description="Part of the allosteric site" evidence="1">
    <location>
        <position position="158"/>
    </location>
</feature>
<feature type="site" description="Part of the allosteric site" evidence="1">
    <location>
        <position position="160"/>
    </location>
</feature>
<feature type="site" description="Part of the allosteric site" evidence="1">
    <location>
        <position position="161"/>
    </location>
</feature>
<feature type="site" description="Part of the allosteric site" evidence="1">
    <location>
        <position position="254"/>
    </location>
</feature>
<accession>B5FBU7</accession>
<gene>
    <name evidence="1" type="primary">nagB</name>
    <name type="ordered locus">VFMJ11_2478</name>
</gene>
<protein>
    <recommendedName>
        <fullName evidence="1">Glucosamine-6-phosphate deaminase</fullName>
        <ecNumber evidence="1">3.5.99.6</ecNumber>
    </recommendedName>
    <alternativeName>
        <fullName evidence="1">GlcN6P deaminase</fullName>
        <shortName evidence="1">GNPDA</shortName>
    </alternativeName>
    <alternativeName>
        <fullName evidence="1">Glucosamine-6-phosphate isomerase</fullName>
    </alternativeName>
</protein>
<organism>
    <name type="scientific">Aliivibrio fischeri (strain MJ11)</name>
    <name type="common">Vibrio fischeri</name>
    <dbReference type="NCBI Taxonomy" id="388396"/>
    <lineage>
        <taxon>Bacteria</taxon>
        <taxon>Pseudomonadati</taxon>
        <taxon>Pseudomonadota</taxon>
        <taxon>Gammaproteobacteria</taxon>
        <taxon>Vibrionales</taxon>
        <taxon>Vibrionaceae</taxon>
        <taxon>Aliivibrio</taxon>
    </lineage>
</organism>
<dbReference type="EC" id="3.5.99.6" evidence="1"/>
<dbReference type="EMBL" id="CP001139">
    <property type="protein sequence ID" value="ACH65458.1"/>
    <property type="molecule type" value="Genomic_DNA"/>
</dbReference>
<dbReference type="RefSeq" id="WP_011262751.1">
    <property type="nucleotide sequence ID" value="NC_011184.1"/>
</dbReference>
<dbReference type="SMR" id="B5FBU7"/>
<dbReference type="GeneID" id="54165079"/>
<dbReference type="KEGG" id="vfm:VFMJ11_2478"/>
<dbReference type="HOGENOM" id="CLU_049611_0_1_6"/>
<dbReference type="UniPathway" id="UPA00629">
    <property type="reaction ID" value="UER00684"/>
</dbReference>
<dbReference type="Proteomes" id="UP000001857">
    <property type="component" value="Chromosome I"/>
</dbReference>
<dbReference type="GO" id="GO:0005737">
    <property type="term" value="C:cytoplasm"/>
    <property type="evidence" value="ECO:0007669"/>
    <property type="project" value="TreeGrafter"/>
</dbReference>
<dbReference type="GO" id="GO:0004342">
    <property type="term" value="F:glucosamine-6-phosphate deaminase activity"/>
    <property type="evidence" value="ECO:0007669"/>
    <property type="project" value="UniProtKB-UniRule"/>
</dbReference>
<dbReference type="GO" id="GO:0042802">
    <property type="term" value="F:identical protein binding"/>
    <property type="evidence" value="ECO:0007669"/>
    <property type="project" value="TreeGrafter"/>
</dbReference>
<dbReference type="GO" id="GO:0005975">
    <property type="term" value="P:carbohydrate metabolic process"/>
    <property type="evidence" value="ECO:0007669"/>
    <property type="project" value="InterPro"/>
</dbReference>
<dbReference type="GO" id="GO:0006043">
    <property type="term" value="P:glucosamine catabolic process"/>
    <property type="evidence" value="ECO:0007669"/>
    <property type="project" value="TreeGrafter"/>
</dbReference>
<dbReference type="GO" id="GO:0006046">
    <property type="term" value="P:N-acetylglucosamine catabolic process"/>
    <property type="evidence" value="ECO:0007669"/>
    <property type="project" value="TreeGrafter"/>
</dbReference>
<dbReference type="GO" id="GO:0019262">
    <property type="term" value="P:N-acetylneuraminate catabolic process"/>
    <property type="evidence" value="ECO:0007669"/>
    <property type="project" value="UniProtKB-UniRule"/>
</dbReference>
<dbReference type="CDD" id="cd01399">
    <property type="entry name" value="GlcN6P_deaminase"/>
    <property type="match status" value="1"/>
</dbReference>
<dbReference type="FunFam" id="3.40.50.1360:FF:000002">
    <property type="entry name" value="Glucosamine-6-phosphate deaminase"/>
    <property type="match status" value="1"/>
</dbReference>
<dbReference type="Gene3D" id="3.40.50.1360">
    <property type="match status" value="1"/>
</dbReference>
<dbReference type="HAMAP" id="MF_01241">
    <property type="entry name" value="GlcN6P_deamin"/>
    <property type="match status" value="1"/>
</dbReference>
<dbReference type="InterPro" id="IPR006148">
    <property type="entry name" value="Glc/Gal-6P_isomerase"/>
</dbReference>
<dbReference type="InterPro" id="IPR004547">
    <property type="entry name" value="Glucosamine6P_isomerase"/>
</dbReference>
<dbReference type="InterPro" id="IPR018321">
    <property type="entry name" value="Glucosamine6P_isomerase_CS"/>
</dbReference>
<dbReference type="InterPro" id="IPR037171">
    <property type="entry name" value="NagB/RpiA_transferase-like"/>
</dbReference>
<dbReference type="NCBIfam" id="TIGR00502">
    <property type="entry name" value="nagB"/>
    <property type="match status" value="1"/>
</dbReference>
<dbReference type="PANTHER" id="PTHR11280">
    <property type="entry name" value="GLUCOSAMINE-6-PHOSPHATE ISOMERASE"/>
    <property type="match status" value="1"/>
</dbReference>
<dbReference type="PANTHER" id="PTHR11280:SF5">
    <property type="entry name" value="GLUCOSAMINE-6-PHOSPHATE ISOMERASE"/>
    <property type="match status" value="1"/>
</dbReference>
<dbReference type="Pfam" id="PF01182">
    <property type="entry name" value="Glucosamine_iso"/>
    <property type="match status" value="1"/>
</dbReference>
<dbReference type="SUPFAM" id="SSF100950">
    <property type="entry name" value="NagB/RpiA/CoA transferase-like"/>
    <property type="match status" value="1"/>
</dbReference>
<dbReference type="PROSITE" id="PS01161">
    <property type="entry name" value="GLC_GALNAC_ISOMERASE"/>
    <property type="match status" value="1"/>
</dbReference>
<evidence type="ECO:0000255" key="1">
    <source>
        <dbReference type="HAMAP-Rule" id="MF_01241"/>
    </source>
</evidence>